<name>IHFA_COXBU</name>
<feature type="chain" id="PRO_0000277725" description="Integration host factor subunit alpha">
    <location>
        <begin position="1"/>
        <end position="103"/>
    </location>
</feature>
<feature type="region of interest" description="Disordered" evidence="2">
    <location>
        <begin position="50"/>
        <end position="72"/>
    </location>
</feature>
<feature type="compositionally biased region" description="Basic and acidic residues" evidence="2">
    <location>
        <begin position="54"/>
        <end position="69"/>
    </location>
</feature>
<proteinExistence type="inferred from homology"/>
<evidence type="ECO:0000255" key="1">
    <source>
        <dbReference type="HAMAP-Rule" id="MF_00380"/>
    </source>
</evidence>
<evidence type="ECO:0000256" key="2">
    <source>
        <dbReference type="SAM" id="MobiDB-lite"/>
    </source>
</evidence>
<accession>Q83C16</accession>
<keyword id="KW-0233">DNA recombination</keyword>
<keyword id="KW-0238">DNA-binding</keyword>
<keyword id="KW-1185">Reference proteome</keyword>
<keyword id="KW-0804">Transcription</keyword>
<keyword id="KW-0805">Transcription regulation</keyword>
<keyword id="KW-0810">Translation regulation</keyword>
<gene>
    <name evidence="1" type="primary">ihfA</name>
    <name evidence="1" type="synonym">himA</name>
    <name type="ordered locus">CBU_1320</name>
</gene>
<comment type="function">
    <text evidence="1">This protein is one of the two subunits of integration host factor, a specific DNA-binding protein that functions in genetic recombination as well as in transcriptional and translational control.</text>
</comment>
<comment type="subunit">
    <text evidence="1">Heterodimer of an alpha and a beta chain.</text>
</comment>
<comment type="similarity">
    <text evidence="1">Belongs to the bacterial histone-like protein family.</text>
</comment>
<sequence>MALTKADLSEHLFNVVGLNKREAKDLVELFFKEISLSLERGEPVKLSGFGNFNLRDKGERPGRNPKTGEEIPITARRVVTFRAGHKLKSRVEKNVKPKEEGES</sequence>
<dbReference type="EMBL" id="AE016828">
    <property type="protein sequence ID" value="AAO90824.1"/>
    <property type="molecule type" value="Genomic_DNA"/>
</dbReference>
<dbReference type="RefSeq" id="NP_820310.1">
    <property type="nucleotide sequence ID" value="NC_002971.4"/>
</dbReference>
<dbReference type="RefSeq" id="WP_005770927.1">
    <property type="nucleotide sequence ID" value="NZ_CDBG01000001.1"/>
</dbReference>
<dbReference type="SMR" id="Q83C16"/>
<dbReference type="STRING" id="227377.CBU_1320"/>
<dbReference type="DNASU" id="1209226"/>
<dbReference type="EnsemblBacteria" id="AAO90824">
    <property type="protein sequence ID" value="AAO90824"/>
    <property type="gene ID" value="CBU_1320"/>
</dbReference>
<dbReference type="GeneID" id="1209226"/>
<dbReference type="KEGG" id="cbu:CBU_1320"/>
<dbReference type="PATRIC" id="fig|227377.7.peg.1311"/>
<dbReference type="eggNOG" id="COG0776">
    <property type="taxonomic scope" value="Bacteria"/>
</dbReference>
<dbReference type="HOGENOM" id="CLU_105066_1_3_6"/>
<dbReference type="OrthoDB" id="9797747at2"/>
<dbReference type="Proteomes" id="UP000002671">
    <property type="component" value="Chromosome"/>
</dbReference>
<dbReference type="GO" id="GO:0005829">
    <property type="term" value="C:cytosol"/>
    <property type="evidence" value="ECO:0000318"/>
    <property type="project" value="GO_Central"/>
</dbReference>
<dbReference type="GO" id="GO:0003677">
    <property type="term" value="F:DNA binding"/>
    <property type="evidence" value="ECO:0000318"/>
    <property type="project" value="GO_Central"/>
</dbReference>
<dbReference type="GO" id="GO:0030527">
    <property type="term" value="F:structural constituent of chromatin"/>
    <property type="evidence" value="ECO:0007669"/>
    <property type="project" value="InterPro"/>
</dbReference>
<dbReference type="GO" id="GO:0006310">
    <property type="term" value="P:DNA recombination"/>
    <property type="evidence" value="ECO:0007669"/>
    <property type="project" value="UniProtKB-UniRule"/>
</dbReference>
<dbReference type="GO" id="GO:0009893">
    <property type="term" value="P:positive regulation of metabolic process"/>
    <property type="evidence" value="ECO:0007669"/>
    <property type="project" value="UniProtKB-ARBA"/>
</dbReference>
<dbReference type="GO" id="GO:0006355">
    <property type="term" value="P:regulation of DNA-templated transcription"/>
    <property type="evidence" value="ECO:0007669"/>
    <property type="project" value="UniProtKB-UniRule"/>
</dbReference>
<dbReference type="GO" id="GO:0006417">
    <property type="term" value="P:regulation of translation"/>
    <property type="evidence" value="ECO:0007669"/>
    <property type="project" value="UniProtKB-UniRule"/>
</dbReference>
<dbReference type="CDD" id="cd13835">
    <property type="entry name" value="IHF_A"/>
    <property type="match status" value="1"/>
</dbReference>
<dbReference type="FunFam" id="4.10.520.10:FF:000002">
    <property type="entry name" value="Integration host factor subunit alpha"/>
    <property type="match status" value="1"/>
</dbReference>
<dbReference type="Gene3D" id="4.10.520.10">
    <property type="entry name" value="IHF-like DNA-binding proteins"/>
    <property type="match status" value="1"/>
</dbReference>
<dbReference type="HAMAP" id="MF_00380">
    <property type="entry name" value="IHF_alpha"/>
    <property type="match status" value="1"/>
</dbReference>
<dbReference type="InterPro" id="IPR000119">
    <property type="entry name" value="Hist_DNA-bd"/>
</dbReference>
<dbReference type="InterPro" id="IPR020816">
    <property type="entry name" value="Histone-like_DNA-bd_CS"/>
</dbReference>
<dbReference type="InterPro" id="IPR010992">
    <property type="entry name" value="IHF-like_DNA-bd_dom_sf"/>
</dbReference>
<dbReference type="InterPro" id="IPR005684">
    <property type="entry name" value="IHF_alpha"/>
</dbReference>
<dbReference type="NCBIfam" id="TIGR00987">
    <property type="entry name" value="himA"/>
    <property type="match status" value="1"/>
</dbReference>
<dbReference type="NCBIfam" id="NF001401">
    <property type="entry name" value="PRK00285.1"/>
    <property type="match status" value="1"/>
</dbReference>
<dbReference type="PANTHER" id="PTHR33175">
    <property type="entry name" value="DNA-BINDING PROTEIN HU"/>
    <property type="match status" value="1"/>
</dbReference>
<dbReference type="PANTHER" id="PTHR33175:SF2">
    <property type="entry name" value="INTEGRATION HOST FACTOR SUBUNIT ALPHA"/>
    <property type="match status" value="1"/>
</dbReference>
<dbReference type="Pfam" id="PF00216">
    <property type="entry name" value="Bac_DNA_binding"/>
    <property type="match status" value="1"/>
</dbReference>
<dbReference type="PRINTS" id="PR01727">
    <property type="entry name" value="DNABINDINGHU"/>
</dbReference>
<dbReference type="SMART" id="SM00411">
    <property type="entry name" value="BHL"/>
    <property type="match status" value="1"/>
</dbReference>
<dbReference type="SUPFAM" id="SSF47729">
    <property type="entry name" value="IHF-like DNA-binding proteins"/>
    <property type="match status" value="1"/>
</dbReference>
<dbReference type="PROSITE" id="PS00045">
    <property type="entry name" value="HISTONE_LIKE"/>
    <property type="match status" value="1"/>
</dbReference>
<organism>
    <name type="scientific">Coxiella burnetii (strain RSA 493 / Nine Mile phase I)</name>
    <dbReference type="NCBI Taxonomy" id="227377"/>
    <lineage>
        <taxon>Bacteria</taxon>
        <taxon>Pseudomonadati</taxon>
        <taxon>Pseudomonadota</taxon>
        <taxon>Gammaproteobacteria</taxon>
        <taxon>Legionellales</taxon>
        <taxon>Coxiellaceae</taxon>
        <taxon>Coxiella</taxon>
    </lineage>
</organism>
<protein>
    <recommendedName>
        <fullName evidence="1">Integration host factor subunit alpha</fullName>
        <shortName evidence="1">IHF-alpha</shortName>
    </recommendedName>
</protein>
<reference key="1">
    <citation type="journal article" date="2003" name="Proc. Natl. Acad. Sci. U.S.A.">
        <title>Complete genome sequence of the Q-fever pathogen, Coxiella burnetii.</title>
        <authorList>
            <person name="Seshadri R."/>
            <person name="Paulsen I.T."/>
            <person name="Eisen J.A."/>
            <person name="Read T.D."/>
            <person name="Nelson K.E."/>
            <person name="Nelson W.C."/>
            <person name="Ward N.L."/>
            <person name="Tettelin H."/>
            <person name="Davidsen T.M."/>
            <person name="Beanan M.J."/>
            <person name="DeBoy R.T."/>
            <person name="Daugherty S.C."/>
            <person name="Brinkac L.M."/>
            <person name="Madupu R."/>
            <person name="Dodson R.J."/>
            <person name="Khouri H.M."/>
            <person name="Lee K.H."/>
            <person name="Carty H.A."/>
            <person name="Scanlan D."/>
            <person name="Heinzen R.A."/>
            <person name="Thompson H.A."/>
            <person name="Samuel J.E."/>
            <person name="Fraser C.M."/>
            <person name="Heidelberg J.F."/>
        </authorList>
    </citation>
    <scope>NUCLEOTIDE SEQUENCE [LARGE SCALE GENOMIC DNA]</scope>
    <source>
        <strain>RSA 493 / Nine Mile phase I</strain>
    </source>
</reference>